<sequence>MKRIAVFPSGGDAPGMNAAIRAVVRKAISEGMEVYGINRGYAGMVDGDIFPLGSKEVGDKISRGGTFLYSARYPEFAQLEGQLAGIEQLKKHGIEGVVVIGGDGSYHGAMRLTEHGFPAVGIPGTIDNDIAGTDYTIGFDTAVNTAVEAIDKLRDTSSSHGRTFVVEVMGRNAGDIALWAGIASGADQIIVPEEEFDIEKVASTIQYDFEHKGKNHHIIVLAEGVMSGEAFAQKLKEAGDKSDLRVTNLGHILRGGSPTARDRVIASWMGSHAVELLKEGKGGLAVGIHNEELVESPILGTAEEGALFSLTEEGKIIVNNPHKARLDFAALNRSLSQ</sequence>
<name>PFKA_STRPF</name>
<accession>Q1J694</accession>
<gene>
    <name evidence="1" type="primary">pfkA</name>
    <name type="ordered locus">MGAS10750_Spy1139</name>
</gene>
<dbReference type="EC" id="2.7.1.11" evidence="1"/>
<dbReference type="EMBL" id="CP000262">
    <property type="protein sequence ID" value="ABF38089.1"/>
    <property type="molecule type" value="Genomic_DNA"/>
</dbReference>
<dbReference type="SMR" id="Q1J694"/>
<dbReference type="KEGG" id="spi:MGAS10750_Spy1139"/>
<dbReference type="HOGENOM" id="CLU_020655_0_1_9"/>
<dbReference type="UniPathway" id="UPA00109">
    <property type="reaction ID" value="UER00182"/>
</dbReference>
<dbReference type="Proteomes" id="UP000002434">
    <property type="component" value="Chromosome"/>
</dbReference>
<dbReference type="GO" id="GO:0005945">
    <property type="term" value="C:6-phosphofructokinase complex"/>
    <property type="evidence" value="ECO:0007669"/>
    <property type="project" value="TreeGrafter"/>
</dbReference>
<dbReference type="GO" id="GO:0003872">
    <property type="term" value="F:6-phosphofructokinase activity"/>
    <property type="evidence" value="ECO:0007669"/>
    <property type="project" value="UniProtKB-UniRule"/>
</dbReference>
<dbReference type="GO" id="GO:0016208">
    <property type="term" value="F:AMP binding"/>
    <property type="evidence" value="ECO:0007669"/>
    <property type="project" value="TreeGrafter"/>
</dbReference>
<dbReference type="GO" id="GO:0005524">
    <property type="term" value="F:ATP binding"/>
    <property type="evidence" value="ECO:0007669"/>
    <property type="project" value="UniProtKB-KW"/>
</dbReference>
<dbReference type="GO" id="GO:0070095">
    <property type="term" value="F:fructose-6-phosphate binding"/>
    <property type="evidence" value="ECO:0007669"/>
    <property type="project" value="TreeGrafter"/>
</dbReference>
<dbReference type="GO" id="GO:0042802">
    <property type="term" value="F:identical protein binding"/>
    <property type="evidence" value="ECO:0007669"/>
    <property type="project" value="TreeGrafter"/>
</dbReference>
<dbReference type="GO" id="GO:0046872">
    <property type="term" value="F:metal ion binding"/>
    <property type="evidence" value="ECO:0007669"/>
    <property type="project" value="UniProtKB-KW"/>
</dbReference>
<dbReference type="GO" id="GO:0048029">
    <property type="term" value="F:monosaccharide binding"/>
    <property type="evidence" value="ECO:0007669"/>
    <property type="project" value="TreeGrafter"/>
</dbReference>
<dbReference type="GO" id="GO:0061621">
    <property type="term" value="P:canonical glycolysis"/>
    <property type="evidence" value="ECO:0007669"/>
    <property type="project" value="TreeGrafter"/>
</dbReference>
<dbReference type="GO" id="GO:0030388">
    <property type="term" value="P:fructose 1,6-bisphosphate metabolic process"/>
    <property type="evidence" value="ECO:0007669"/>
    <property type="project" value="TreeGrafter"/>
</dbReference>
<dbReference type="GO" id="GO:0006002">
    <property type="term" value="P:fructose 6-phosphate metabolic process"/>
    <property type="evidence" value="ECO:0007669"/>
    <property type="project" value="InterPro"/>
</dbReference>
<dbReference type="FunFam" id="3.40.50.450:FF:000001">
    <property type="entry name" value="ATP-dependent 6-phosphofructokinase"/>
    <property type="match status" value="1"/>
</dbReference>
<dbReference type="FunFam" id="3.40.50.460:FF:000002">
    <property type="entry name" value="ATP-dependent 6-phosphofructokinase"/>
    <property type="match status" value="1"/>
</dbReference>
<dbReference type="Gene3D" id="3.40.50.450">
    <property type="match status" value="1"/>
</dbReference>
<dbReference type="Gene3D" id="3.40.50.460">
    <property type="entry name" value="Phosphofructokinase domain"/>
    <property type="match status" value="1"/>
</dbReference>
<dbReference type="HAMAP" id="MF_00339">
    <property type="entry name" value="Phosphofructokinase_I_B1"/>
    <property type="match status" value="1"/>
</dbReference>
<dbReference type="InterPro" id="IPR022953">
    <property type="entry name" value="ATP_PFK"/>
</dbReference>
<dbReference type="InterPro" id="IPR012003">
    <property type="entry name" value="ATP_PFK_prok-type"/>
</dbReference>
<dbReference type="InterPro" id="IPR012828">
    <property type="entry name" value="PFKA_ATP_prok"/>
</dbReference>
<dbReference type="InterPro" id="IPR015912">
    <property type="entry name" value="Phosphofructokinase_CS"/>
</dbReference>
<dbReference type="InterPro" id="IPR000023">
    <property type="entry name" value="Phosphofructokinase_dom"/>
</dbReference>
<dbReference type="InterPro" id="IPR035966">
    <property type="entry name" value="PKF_sf"/>
</dbReference>
<dbReference type="NCBIfam" id="TIGR02482">
    <property type="entry name" value="PFKA_ATP"/>
    <property type="match status" value="1"/>
</dbReference>
<dbReference type="NCBIfam" id="NF002872">
    <property type="entry name" value="PRK03202.1"/>
    <property type="match status" value="1"/>
</dbReference>
<dbReference type="PANTHER" id="PTHR13697:SF4">
    <property type="entry name" value="ATP-DEPENDENT 6-PHOSPHOFRUCTOKINASE"/>
    <property type="match status" value="1"/>
</dbReference>
<dbReference type="PANTHER" id="PTHR13697">
    <property type="entry name" value="PHOSPHOFRUCTOKINASE"/>
    <property type="match status" value="1"/>
</dbReference>
<dbReference type="Pfam" id="PF00365">
    <property type="entry name" value="PFK"/>
    <property type="match status" value="1"/>
</dbReference>
<dbReference type="PIRSF" id="PIRSF000532">
    <property type="entry name" value="ATP_PFK_prok"/>
    <property type="match status" value="1"/>
</dbReference>
<dbReference type="PRINTS" id="PR00476">
    <property type="entry name" value="PHFRCTKINASE"/>
</dbReference>
<dbReference type="SUPFAM" id="SSF53784">
    <property type="entry name" value="Phosphofructokinase"/>
    <property type="match status" value="1"/>
</dbReference>
<dbReference type="PROSITE" id="PS00433">
    <property type="entry name" value="PHOSPHOFRUCTOKINASE"/>
    <property type="match status" value="1"/>
</dbReference>
<keyword id="KW-0021">Allosteric enzyme</keyword>
<keyword id="KW-0067">ATP-binding</keyword>
<keyword id="KW-0963">Cytoplasm</keyword>
<keyword id="KW-0324">Glycolysis</keyword>
<keyword id="KW-0418">Kinase</keyword>
<keyword id="KW-0460">Magnesium</keyword>
<keyword id="KW-0479">Metal-binding</keyword>
<keyword id="KW-0547">Nucleotide-binding</keyword>
<keyword id="KW-0808">Transferase</keyword>
<feature type="chain" id="PRO_1000059798" description="ATP-dependent 6-phosphofructokinase">
    <location>
        <begin position="1"/>
        <end position="337"/>
    </location>
</feature>
<feature type="active site" description="Proton acceptor" evidence="1">
    <location>
        <position position="127"/>
    </location>
</feature>
<feature type="binding site" evidence="1">
    <location>
        <position position="11"/>
    </location>
    <ligand>
        <name>ATP</name>
        <dbReference type="ChEBI" id="CHEBI:30616"/>
    </ligand>
</feature>
<feature type="binding site" evidence="1">
    <location>
        <begin position="21"/>
        <end position="25"/>
    </location>
    <ligand>
        <name>ADP</name>
        <dbReference type="ChEBI" id="CHEBI:456216"/>
        <note>allosteric activator; ligand shared between dimeric partners</note>
    </ligand>
</feature>
<feature type="binding site" evidence="1">
    <location>
        <begin position="72"/>
        <end position="73"/>
    </location>
    <ligand>
        <name>ATP</name>
        <dbReference type="ChEBI" id="CHEBI:30616"/>
    </ligand>
</feature>
<feature type="binding site" evidence="1">
    <location>
        <begin position="102"/>
        <end position="105"/>
    </location>
    <ligand>
        <name>ATP</name>
        <dbReference type="ChEBI" id="CHEBI:30616"/>
    </ligand>
</feature>
<feature type="binding site" evidence="1">
    <location>
        <position position="103"/>
    </location>
    <ligand>
        <name>Mg(2+)</name>
        <dbReference type="ChEBI" id="CHEBI:18420"/>
        <note>catalytic</note>
    </ligand>
</feature>
<feature type="binding site" description="in other chain" evidence="1">
    <location>
        <begin position="125"/>
        <end position="127"/>
    </location>
    <ligand>
        <name>substrate</name>
        <note>ligand shared between dimeric partners</note>
    </ligand>
</feature>
<feature type="binding site" description="in other chain" evidence="1">
    <location>
        <position position="154"/>
    </location>
    <ligand>
        <name>ADP</name>
        <dbReference type="ChEBI" id="CHEBI:456216"/>
        <note>allosteric activator; ligand shared between dimeric partners</note>
    </ligand>
</feature>
<feature type="binding site" evidence="1">
    <location>
        <position position="162"/>
    </location>
    <ligand>
        <name>substrate</name>
        <note>ligand shared between dimeric partners</note>
    </ligand>
</feature>
<feature type="binding site" description="in other chain" evidence="1">
    <location>
        <begin position="169"/>
        <end position="171"/>
    </location>
    <ligand>
        <name>substrate</name>
        <note>ligand shared between dimeric partners</note>
    </ligand>
</feature>
<feature type="binding site" description="in other chain" evidence="1">
    <location>
        <begin position="185"/>
        <end position="187"/>
    </location>
    <ligand>
        <name>ADP</name>
        <dbReference type="ChEBI" id="CHEBI:456216"/>
        <note>allosteric activator; ligand shared between dimeric partners</note>
    </ligand>
</feature>
<feature type="binding site" description="in other chain" evidence="1">
    <location>
        <position position="212"/>
    </location>
    <ligand>
        <name>ADP</name>
        <dbReference type="ChEBI" id="CHEBI:456216"/>
        <note>allosteric activator; ligand shared between dimeric partners</note>
    </ligand>
</feature>
<feature type="binding site" description="in other chain" evidence="1">
    <location>
        <begin position="214"/>
        <end position="216"/>
    </location>
    <ligand>
        <name>ADP</name>
        <dbReference type="ChEBI" id="CHEBI:456216"/>
        <note>allosteric activator; ligand shared between dimeric partners</note>
    </ligand>
</feature>
<feature type="binding site" description="in other chain" evidence="1">
    <location>
        <position position="223"/>
    </location>
    <ligand>
        <name>substrate</name>
        <note>ligand shared between dimeric partners</note>
    </ligand>
</feature>
<feature type="binding site" evidence="1">
    <location>
        <position position="245"/>
    </location>
    <ligand>
        <name>substrate</name>
        <note>ligand shared between dimeric partners</note>
    </ligand>
</feature>
<feature type="binding site" description="in other chain" evidence="1">
    <location>
        <begin position="251"/>
        <end position="254"/>
    </location>
    <ligand>
        <name>substrate</name>
        <note>ligand shared between dimeric partners</note>
    </ligand>
</feature>
<protein>
    <recommendedName>
        <fullName evidence="1">ATP-dependent 6-phosphofructokinase</fullName>
        <shortName evidence="1">ATP-PFK</shortName>
        <shortName evidence="1">Phosphofructokinase</shortName>
        <ecNumber evidence="1">2.7.1.11</ecNumber>
    </recommendedName>
    <alternativeName>
        <fullName evidence="1">Phosphohexokinase</fullName>
    </alternativeName>
</protein>
<proteinExistence type="inferred from homology"/>
<evidence type="ECO:0000255" key="1">
    <source>
        <dbReference type="HAMAP-Rule" id="MF_00339"/>
    </source>
</evidence>
<organism>
    <name type="scientific">Streptococcus pyogenes serotype M4 (strain MGAS10750)</name>
    <dbReference type="NCBI Taxonomy" id="370554"/>
    <lineage>
        <taxon>Bacteria</taxon>
        <taxon>Bacillati</taxon>
        <taxon>Bacillota</taxon>
        <taxon>Bacilli</taxon>
        <taxon>Lactobacillales</taxon>
        <taxon>Streptococcaceae</taxon>
        <taxon>Streptococcus</taxon>
    </lineage>
</organism>
<comment type="function">
    <text evidence="1">Catalyzes the phosphorylation of D-fructose 6-phosphate to fructose 1,6-bisphosphate by ATP, the first committing step of glycolysis.</text>
</comment>
<comment type="catalytic activity">
    <reaction evidence="1">
        <text>beta-D-fructose 6-phosphate + ATP = beta-D-fructose 1,6-bisphosphate + ADP + H(+)</text>
        <dbReference type="Rhea" id="RHEA:16109"/>
        <dbReference type="ChEBI" id="CHEBI:15378"/>
        <dbReference type="ChEBI" id="CHEBI:30616"/>
        <dbReference type="ChEBI" id="CHEBI:32966"/>
        <dbReference type="ChEBI" id="CHEBI:57634"/>
        <dbReference type="ChEBI" id="CHEBI:456216"/>
        <dbReference type="EC" id="2.7.1.11"/>
    </reaction>
</comment>
<comment type="cofactor">
    <cofactor evidence="1">
        <name>Mg(2+)</name>
        <dbReference type="ChEBI" id="CHEBI:18420"/>
    </cofactor>
</comment>
<comment type="activity regulation">
    <text evidence="1">Allosterically activated by ADP and other diphosphonucleosides, and allosterically inhibited by phosphoenolpyruvate.</text>
</comment>
<comment type="pathway">
    <text evidence="1">Carbohydrate degradation; glycolysis; D-glyceraldehyde 3-phosphate and glycerone phosphate from D-glucose: step 3/4.</text>
</comment>
<comment type="subunit">
    <text evidence="1">Homotetramer.</text>
</comment>
<comment type="subcellular location">
    <subcellularLocation>
        <location evidence="1">Cytoplasm</location>
    </subcellularLocation>
</comment>
<comment type="similarity">
    <text evidence="1">Belongs to the phosphofructokinase type A (PFKA) family. ATP-dependent PFK group I subfamily. Prokaryotic clade 'B1' sub-subfamily.</text>
</comment>
<reference key="1">
    <citation type="journal article" date="2006" name="Proc. Natl. Acad. Sci. U.S.A.">
        <title>Molecular genetic anatomy of inter- and intraserotype variation in the human bacterial pathogen group A Streptococcus.</title>
        <authorList>
            <person name="Beres S.B."/>
            <person name="Richter E.W."/>
            <person name="Nagiec M.J."/>
            <person name="Sumby P."/>
            <person name="Porcella S.F."/>
            <person name="DeLeo F.R."/>
            <person name="Musser J.M."/>
        </authorList>
    </citation>
    <scope>NUCLEOTIDE SEQUENCE [LARGE SCALE GENOMIC DNA]</scope>
    <source>
        <strain>MGAS10750</strain>
    </source>
</reference>